<organism>
    <name type="scientific">Marchantia polymorpha</name>
    <name type="common">Common liverwort</name>
    <name type="synonym">Marchantia aquatica</name>
    <dbReference type="NCBI Taxonomy" id="3197"/>
    <lineage>
        <taxon>Eukaryota</taxon>
        <taxon>Viridiplantae</taxon>
        <taxon>Streptophyta</taxon>
        <taxon>Embryophyta</taxon>
        <taxon>Marchantiophyta</taxon>
        <taxon>Marchantiopsida</taxon>
        <taxon>Marchantiidae</taxon>
        <taxon>Marchantiales</taxon>
        <taxon>Marchantiaceae</taxon>
        <taxon>Marchantia</taxon>
    </lineage>
</organism>
<feature type="chain" id="PRO_0000217612" description="Photosystem I assembly protein Ycf4">
    <location>
        <begin position="1"/>
        <end position="184"/>
    </location>
</feature>
<feature type="transmembrane region" description="Helical" evidence="1">
    <location>
        <begin position="21"/>
        <end position="43"/>
    </location>
</feature>
<feature type="transmembrane region" description="Helical" evidence="1">
    <location>
        <begin position="58"/>
        <end position="80"/>
    </location>
</feature>
<sequence>MNLQVDHIRVDFIIGSRRISNFCWAFILLFGALGFFFVGFSSYLQKDLIPFLSAEQILFIPQGIVMCFYGIAGLFISFYLWCTICWNVGSGYNKFDKQKGIFSIFRWGFPGKNRRIFIQFLIKDIQSIRMEVQEGFLSRRVLYIKIKGQPDIPLSRIEEYFTLREMEDKAAELARFLKVSIEGI</sequence>
<accession>P12205</accession>
<evidence type="ECO:0000255" key="1">
    <source>
        <dbReference type="HAMAP-Rule" id="MF_00437"/>
    </source>
</evidence>
<keyword id="KW-0150">Chloroplast</keyword>
<keyword id="KW-0472">Membrane</keyword>
<keyword id="KW-0602">Photosynthesis</keyword>
<keyword id="KW-0934">Plastid</keyword>
<keyword id="KW-0793">Thylakoid</keyword>
<keyword id="KW-0812">Transmembrane</keyword>
<keyword id="KW-1133">Transmembrane helix</keyword>
<dbReference type="EMBL" id="X04465">
    <property type="protein sequence ID" value="CAA28095.1"/>
    <property type="molecule type" value="Genomic_DNA"/>
</dbReference>
<dbReference type="PIR" id="S01532">
    <property type="entry name" value="A05045"/>
</dbReference>
<dbReference type="RefSeq" id="NP_039309.1">
    <property type="nucleotide sequence ID" value="NC_001319.1"/>
</dbReference>
<dbReference type="GeneID" id="2702598"/>
<dbReference type="GO" id="GO:0009535">
    <property type="term" value="C:chloroplast thylakoid membrane"/>
    <property type="evidence" value="ECO:0007669"/>
    <property type="project" value="UniProtKB-SubCell"/>
</dbReference>
<dbReference type="GO" id="GO:0009522">
    <property type="term" value="C:photosystem I"/>
    <property type="evidence" value="ECO:0007669"/>
    <property type="project" value="InterPro"/>
</dbReference>
<dbReference type="GO" id="GO:0015979">
    <property type="term" value="P:photosynthesis"/>
    <property type="evidence" value="ECO:0007669"/>
    <property type="project" value="UniProtKB-UniRule"/>
</dbReference>
<dbReference type="HAMAP" id="MF_00437">
    <property type="entry name" value="Ycf4"/>
    <property type="match status" value="1"/>
</dbReference>
<dbReference type="InterPro" id="IPR003359">
    <property type="entry name" value="PSI_Ycf4_assembly"/>
</dbReference>
<dbReference type="NCBIfam" id="NF002712">
    <property type="entry name" value="PRK02542.1"/>
    <property type="match status" value="1"/>
</dbReference>
<dbReference type="PANTHER" id="PTHR33288">
    <property type="match status" value="1"/>
</dbReference>
<dbReference type="PANTHER" id="PTHR33288:SF4">
    <property type="entry name" value="PHOTOSYSTEM I ASSEMBLY PROTEIN YCF4"/>
    <property type="match status" value="1"/>
</dbReference>
<dbReference type="Pfam" id="PF02392">
    <property type="entry name" value="Ycf4"/>
    <property type="match status" value="1"/>
</dbReference>
<protein>
    <recommendedName>
        <fullName evidence="1">Photosystem I assembly protein Ycf4</fullName>
    </recommendedName>
</protein>
<comment type="function">
    <text evidence="1">Seems to be required for the assembly of the photosystem I complex.</text>
</comment>
<comment type="subcellular location">
    <subcellularLocation>
        <location evidence="1">Plastid</location>
        <location evidence="1">Chloroplast thylakoid membrane</location>
        <topology evidence="1">Multi-pass membrane protein</topology>
    </subcellularLocation>
</comment>
<comment type="similarity">
    <text evidence="1">Belongs to the Ycf4 family.</text>
</comment>
<proteinExistence type="inferred from homology"/>
<name>YCF4_MARPO</name>
<geneLocation type="chloroplast"/>
<reference key="1">
    <citation type="journal article" date="1988" name="J. Mol. Biol.">
        <title>Structure and organization of Marchantia polymorpha chloroplast genome. III. Gene organization of the large single copy region from rbcL to trnI(CAU).</title>
        <authorList>
            <person name="Fukuzawa H."/>
            <person name="Kohchi T."/>
            <person name="Sano T."/>
            <person name="Shirai H."/>
            <person name="Umesono K."/>
            <person name="Inokuchi H."/>
            <person name="Ozeki H."/>
            <person name="Ohyama K."/>
        </authorList>
    </citation>
    <scope>NUCLEOTIDE SEQUENCE [GENOMIC DNA]</scope>
</reference>
<reference key="2">
    <citation type="journal article" date="1986" name="Nature">
        <title>Chloroplast gene organization deduced from complete sequence of liverwort Marchantia polymorpha chloroplast DNA.</title>
        <authorList>
            <person name="Ohyama K."/>
            <person name="Fukuzawa H."/>
            <person name="Kohchi T."/>
            <person name="Shirai H."/>
            <person name="Sano T."/>
            <person name="Sano S."/>
            <person name="Umesono K."/>
            <person name="Shiki Y."/>
            <person name="Takeuchi M."/>
            <person name="Chang Z."/>
            <person name="Aota S."/>
            <person name="Inokuchi H."/>
            <person name="Ozeki H."/>
        </authorList>
    </citation>
    <scope>NUCLEOTIDE SEQUENCE [LARGE SCALE GENOMIC DNA]</scope>
</reference>
<gene>
    <name evidence="1" type="primary">ycf4</name>
</gene>